<gene>
    <name evidence="1" type="primary">greA</name>
    <name type="ordered locus">XF_1108</name>
</gene>
<name>GREA_XYLFA</name>
<protein>
    <recommendedName>
        <fullName evidence="1">Transcription elongation factor GreA</fullName>
    </recommendedName>
    <alternativeName>
        <fullName evidence="1">Transcript cleavage factor GreA</fullName>
    </alternativeName>
</protein>
<dbReference type="EMBL" id="AE003849">
    <property type="protein sequence ID" value="AAF83918.1"/>
    <property type="status" value="ALT_INIT"/>
    <property type="molecule type" value="Genomic_DNA"/>
</dbReference>
<dbReference type="RefSeq" id="WP_023906825.1">
    <property type="nucleotide sequence ID" value="NC_002488.3"/>
</dbReference>
<dbReference type="SMR" id="Q9PEC0"/>
<dbReference type="STRING" id="160492.XF_1108"/>
<dbReference type="KEGG" id="xfa:XF_1108"/>
<dbReference type="eggNOG" id="COG0782">
    <property type="taxonomic scope" value="Bacteria"/>
</dbReference>
<dbReference type="HOGENOM" id="CLU_101379_2_0_6"/>
<dbReference type="Proteomes" id="UP000000812">
    <property type="component" value="Chromosome"/>
</dbReference>
<dbReference type="GO" id="GO:0003677">
    <property type="term" value="F:DNA binding"/>
    <property type="evidence" value="ECO:0007669"/>
    <property type="project" value="UniProtKB-UniRule"/>
</dbReference>
<dbReference type="GO" id="GO:0070063">
    <property type="term" value="F:RNA polymerase binding"/>
    <property type="evidence" value="ECO:0007669"/>
    <property type="project" value="InterPro"/>
</dbReference>
<dbReference type="GO" id="GO:0006354">
    <property type="term" value="P:DNA-templated transcription elongation"/>
    <property type="evidence" value="ECO:0007669"/>
    <property type="project" value="TreeGrafter"/>
</dbReference>
<dbReference type="GO" id="GO:0032784">
    <property type="term" value="P:regulation of DNA-templated transcription elongation"/>
    <property type="evidence" value="ECO:0007669"/>
    <property type="project" value="UniProtKB-UniRule"/>
</dbReference>
<dbReference type="FunFam" id="1.10.287.180:FF:000001">
    <property type="entry name" value="Transcription elongation factor GreA"/>
    <property type="match status" value="1"/>
</dbReference>
<dbReference type="FunFam" id="3.10.50.30:FF:000001">
    <property type="entry name" value="Transcription elongation factor GreA"/>
    <property type="match status" value="1"/>
</dbReference>
<dbReference type="Gene3D" id="3.10.50.30">
    <property type="entry name" value="Transcription elongation factor, GreA/GreB, C-terminal domain"/>
    <property type="match status" value="1"/>
</dbReference>
<dbReference type="Gene3D" id="1.10.287.180">
    <property type="entry name" value="Transcription elongation factor, GreA/GreB, N-terminal domain"/>
    <property type="match status" value="1"/>
</dbReference>
<dbReference type="HAMAP" id="MF_00105">
    <property type="entry name" value="GreA_GreB"/>
    <property type="match status" value="1"/>
</dbReference>
<dbReference type="InterPro" id="IPR036953">
    <property type="entry name" value="GreA/GreB_C_sf"/>
</dbReference>
<dbReference type="InterPro" id="IPR018151">
    <property type="entry name" value="TF_GreA/GreB_CS"/>
</dbReference>
<dbReference type="InterPro" id="IPR006359">
    <property type="entry name" value="Tscrpt_elong_fac_GreA"/>
</dbReference>
<dbReference type="InterPro" id="IPR028624">
    <property type="entry name" value="Tscrpt_elong_fac_GreA/B"/>
</dbReference>
<dbReference type="InterPro" id="IPR001437">
    <property type="entry name" value="Tscrpt_elong_fac_GreA/B_C"/>
</dbReference>
<dbReference type="InterPro" id="IPR023459">
    <property type="entry name" value="Tscrpt_elong_fac_GreA/B_fam"/>
</dbReference>
<dbReference type="InterPro" id="IPR022691">
    <property type="entry name" value="Tscrpt_elong_fac_GreA/B_N"/>
</dbReference>
<dbReference type="InterPro" id="IPR036805">
    <property type="entry name" value="Tscrpt_elong_fac_GreA/B_N_sf"/>
</dbReference>
<dbReference type="NCBIfam" id="TIGR01462">
    <property type="entry name" value="greA"/>
    <property type="match status" value="1"/>
</dbReference>
<dbReference type="NCBIfam" id="NF001261">
    <property type="entry name" value="PRK00226.1-2"/>
    <property type="match status" value="1"/>
</dbReference>
<dbReference type="NCBIfam" id="NF001263">
    <property type="entry name" value="PRK00226.1-4"/>
    <property type="match status" value="1"/>
</dbReference>
<dbReference type="NCBIfam" id="NF001264">
    <property type="entry name" value="PRK00226.1-5"/>
    <property type="match status" value="1"/>
</dbReference>
<dbReference type="PANTHER" id="PTHR30437">
    <property type="entry name" value="TRANSCRIPTION ELONGATION FACTOR GREA"/>
    <property type="match status" value="1"/>
</dbReference>
<dbReference type="PANTHER" id="PTHR30437:SF4">
    <property type="entry name" value="TRANSCRIPTION ELONGATION FACTOR GREA"/>
    <property type="match status" value="1"/>
</dbReference>
<dbReference type="Pfam" id="PF01272">
    <property type="entry name" value="GreA_GreB"/>
    <property type="match status" value="1"/>
</dbReference>
<dbReference type="Pfam" id="PF03449">
    <property type="entry name" value="GreA_GreB_N"/>
    <property type="match status" value="1"/>
</dbReference>
<dbReference type="PIRSF" id="PIRSF006092">
    <property type="entry name" value="GreA_GreB"/>
    <property type="match status" value="1"/>
</dbReference>
<dbReference type="SUPFAM" id="SSF54534">
    <property type="entry name" value="FKBP-like"/>
    <property type="match status" value="1"/>
</dbReference>
<dbReference type="SUPFAM" id="SSF46557">
    <property type="entry name" value="GreA transcript cleavage protein, N-terminal domain"/>
    <property type="match status" value="1"/>
</dbReference>
<dbReference type="PROSITE" id="PS00829">
    <property type="entry name" value="GREAB_1"/>
    <property type="match status" value="1"/>
</dbReference>
<accession>Q9PEC0</accession>
<sequence length="158" mass="17444">MRAPMTLKGVRRLRDELEHLKSVKRPEIINAIAEARAHGDLKENAEYHAAREQQSFIEGRIKQLEGELSHAEVIDVAKLNAGTKIVFGATVTLVDLETDEESRYQIVGDLEADIKQGLVAISSPVARALIGKQEGDTIVIEAPAGRREYEVVAVEYIS</sequence>
<feature type="chain" id="PRO_0000177001" description="Transcription elongation factor GreA">
    <location>
        <begin position="1"/>
        <end position="158"/>
    </location>
</feature>
<feature type="coiled-coil region" evidence="1">
    <location>
        <begin position="45"/>
        <end position="72"/>
    </location>
</feature>
<reference key="1">
    <citation type="journal article" date="2000" name="Nature">
        <title>The genome sequence of the plant pathogen Xylella fastidiosa.</title>
        <authorList>
            <person name="Simpson A.J.G."/>
            <person name="Reinach F.C."/>
            <person name="Arruda P."/>
            <person name="Abreu F.A."/>
            <person name="Acencio M."/>
            <person name="Alvarenga R."/>
            <person name="Alves L.M.C."/>
            <person name="Araya J.E."/>
            <person name="Baia G.S."/>
            <person name="Baptista C.S."/>
            <person name="Barros M.H."/>
            <person name="Bonaccorsi E.D."/>
            <person name="Bordin S."/>
            <person name="Bove J.M."/>
            <person name="Briones M.R.S."/>
            <person name="Bueno M.R.P."/>
            <person name="Camargo A.A."/>
            <person name="Camargo L.E.A."/>
            <person name="Carraro D.M."/>
            <person name="Carrer H."/>
            <person name="Colauto N.B."/>
            <person name="Colombo C."/>
            <person name="Costa F.F."/>
            <person name="Costa M.C.R."/>
            <person name="Costa-Neto C.M."/>
            <person name="Coutinho L.L."/>
            <person name="Cristofani M."/>
            <person name="Dias-Neto E."/>
            <person name="Docena C."/>
            <person name="El-Dorry H."/>
            <person name="Facincani A.P."/>
            <person name="Ferreira A.J.S."/>
            <person name="Ferreira V.C.A."/>
            <person name="Ferro J.A."/>
            <person name="Fraga J.S."/>
            <person name="Franca S.C."/>
            <person name="Franco M.C."/>
            <person name="Frohme M."/>
            <person name="Furlan L.R."/>
            <person name="Garnier M."/>
            <person name="Goldman G.H."/>
            <person name="Goldman M.H.S."/>
            <person name="Gomes S.L."/>
            <person name="Gruber A."/>
            <person name="Ho P.L."/>
            <person name="Hoheisel J.D."/>
            <person name="Junqueira M.L."/>
            <person name="Kemper E.L."/>
            <person name="Kitajima J.P."/>
            <person name="Krieger J.E."/>
            <person name="Kuramae E.E."/>
            <person name="Laigret F."/>
            <person name="Lambais M.R."/>
            <person name="Leite L.C.C."/>
            <person name="Lemos E.G.M."/>
            <person name="Lemos M.V.F."/>
            <person name="Lopes S.A."/>
            <person name="Lopes C.R."/>
            <person name="Machado J.A."/>
            <person name="Machado M.A."/>
            <person name="Madeira A.M.B.N."/>
            <person name="Madeira H.M.F."/>
            <person name="Marino C.L."/>
            <person name="Marques M.V."/>
            <person name="Martins E.A.L."/>
            <person name="Martins E.M.F."/>
            <person name="Matsukuma A.Y."/>
            <person name="Menck C.F.M."/>
            <person name="Miracca E.C."/>
            <person name="Miyaki C.Y."/>
            <person name="Monteiro-Vitorello C.B."/>
            <person name="Moon D.H."/>
            <person name="Nagai M.A."/>
            <person name="Nascimento A.L.T.O."/>
            <person name="Netto L.E.S."/>
            <person name="Nhani A. Jr."/>
            <person name="Nobrega F.G."/>
            <person name="Nunes L.R."/>
            <person name="Oliveira M.A."/>
            <person name="de Oliveira M.C."/>
            <person name="de Oliveira R.C."/>
            <person name="Palmieri D.A."/>
            <person name="Paris A."/>
            <person name="Peixoto B.R."/>
            <person name="Pereira G.A.G."/>
            <person name="Pereira H.A. Jr."/>
            <person name="Pesquero J.B."/>
            <person name="Quaggio R.B."/>
            <person name="Roberto P.G."/>
            <person name="Rodrigues V."/>
            <person name="de Rosa A.J.M."/>
            <person name="de Rosa V.E. Jr."/>
            <person name="de Sa R.G."/>
            <person name="Santelli R.V."/>
            <person name="Sawasaki H.E."/>
            <person name="da Silva A.C.R."/>
            <person name="da Silva A.M."/>
            <person name="da Silva F.R."/>
            <person name="Silva W.A. Jr."/>
            <person name="da Silveira J.F."/>
            <person name="Silvestri M.L.Z."/>
            <person name="Siqueira W.J."/>
            <person name="de Souza A.A."/>
            <person name="de Souza A.P."/>
            <person name="Terenzi M.F."/>
            <person name="Truffi D."/>
            <person name="Tsai S.M."/>
            <person name="Tsuhako M.H."/>
            <person name="Vallada H."/>
            <person name="Van Sluys M.A."/>
            <person name="Verjovski-Almeida S."/>
            <person name="Vettore A.L."/>
            <person name="Zago M.A."/>
            <person name="Zatz M."/>
            <person name="Meidanis J."/>
            <person name="Setubal J.C."/>
        </authorList>
    </citation>
    <scope>NUCLEOTIDE SEQUENCE [LARGE SCALE GENOMIC DNA]</scope>
    <source>
        <strain>9a5c</strain>
    </source>
</reference>
<keyword id="KW-0175">Coiled coil</keyword>
<keyword id="KW-0238">DNA-binding</keyword>
<keyword id="KW-0804">Transcription</keyword>
<keyword id="KW-0805">Transcription regulation</keyword>
<proteinExistence type="inferred from homology"/>
<comment type="function">
    <text evidence="1">Necessary for efficient RNA polymerase transcription elongation past template-encoded arresting sites. The arresting sites in DNA have the property of trapping a certain fraction of elongating RNA polymerases that pass through, resulting in locked ternary complexes. Cleavage of the nascent transcript by cleavage factors such as GreA or GreB allows the resumption of elongation from the new 3'terminus. GreA releases sequences of 2 to 3 nucleotides.</text>
</comment>
<comment type="similarity">
    <text evidence="1">Belongs to the GreA/GreB family.</text>
</comment>
<comment type="sequence caution" evidence="2">
    <conflict type="erroneous initiation">
        <sequence resource="EMBL-CDS" id="AAF83918"/>
    </conflict>
</comment>
<evidence type="ECO:0000255" key="1">
    <source>
        <dbReference type="HAMAP-Rule" id="MF_00105"/>
    </source>
</evidence>
<evidence type="ECO:0000305" key="2"/>
<organism>
    <name type="scientific">Xylella fastidiosa (strain 9a5c)</name>
    <dbReference type="NCBI Taxonomy" id="160492"/>
    <lineage>
        <taxon>Bacteria</taxon>
        <taxon>Pseudomonadati</taxon>
        <taxon>Pseudomonadota</taxon>
        <taxon>Gammaproteobacteria</taxon>
        <taxon>Lysobacterales</taxon>
        <taxon>Lysobacteraceae</taxon>
        <taxon>Xylella</taxon>
    </lineage>
</organism>